<accession>Q038U3</accession>
<comment type="catalytic activity">
    <reaction evidence="1">
        <text>tRNA(Gly) + glycine + ATP = glycyl-tRNA(Gly) + AMP + diphosphate</text>
        <dbReference type="Rhea" id="RHEA:16013"/>
        <dbReference type="Rhea" id="RHEA-COMP:9664"/>
        <dbReference type="Rhea" id="RHEA-COMP:9683"/>
        <dbReference type="ChEBI" id="CHEBI:30616"/>
        <dbReference type="ChEBI" id="CHEBI:33019"/>
        <dbReference type="ChEBI" id="CHEBI:57305"/>
        <dbReference type="ChEBI" id="CHEBI:78442"/>
        <dbReference type="ChEBI" id="CHEBI:78522"/>
        <dbReference type="ChEBI" id="CHEBI:456215"/>
        <dbReference type="EC" id="6.1.1.14"/>
    </reaction>
</comment>
<comment type="subunit">
    <text evidence="1">Tetramer of two alpha and two beta subunits.</text>
</comment>
<comment type="subcellular location">
    <subcellularLocation>
        <location evidence="1">Cytoplasm</location>
    </subcellularLocation>
</comment>
<comment type="similarity">
    <text evidence="1">Belongs to the class-II aminoacyl-tRNA synthetase family.</text>
</comment>
<dbReference type="EC" id="6.1.1.14" evidence="1"/>
<dbReference type="EMBL" id="CP000423">
    <property type="protein sequence ID" value="ABJ70279.1"/>
    <property type="molecule type" value="Genomic_DNA"/>
</dbReference>
<dbReference type="RefSeq" id="WP_003660846.1">
    <property type="nucleotide sequence ID" value="NC_008526.1"/>
</dbReference>
<dbReference type="RefSeq" id="YP_806721.1">
    <property type="nucleotide sequence ID" value="NC_008526.1"/>
</dbReference>
<dbReference type="SMR" id="Q038U3"/>
<dbReference type="STRING" id="321967.LSEI_1503"/>
<dbReference type="PaxDb" id="321967-LSEI_1503"/>
<dbReference type="KEGG" id="lca:LSEI_1503"/>
<dbReference type="PATRIC" id="fig|321967.11.peg.1485"/>
<dbReference type="HOGENOM" id="CLU_007220_2_2_9"/>
<dbReference type="Proteomes" id="UP000001651">
    <property type="component" value="Chromosome"/>
</dbReference>
<dbReference type="GO" id="GO:0005829">
    <property type="term" value="C:cytosol"/>
    <property type="evidence" value="ECO:0007669"/>
    <property type="project" value="TreeGrafter"/>
</dbReference>
<dbReference type="GO" id="GO:0005524">
    <property type="term" value="F:ATP binding"/>
    <property type="evidence" value="ECO:0007669"/>
    <property type="project" value="UniProtKB-UniRule"/>
</dbReference>
<dbReference type="GO" id="GO:0004820">
    <property type="term" value="F:glycine-tRNA ligase activity"/>
    <property type="evidence" value="ECO:0007669"/>
    <property type="project" value="UniProtKB-UniRule"/>
</dbReference>
<dbReference type="GO" id="GO:0006426">
    <property type="term" value="P:glycyl-tRNA aminoacylation"/>
    <property type="evidence" value="ECO:0007669"/>
    <property type="project" value="UniProtKB-UniRule"/>
</dbReference>
<dbReference type="HAMAP" id="MF_00255">
    <property type="entry name" value="Gly_tRNA_synth_beta"/>
    <property type="match status" value="1"/>
</dbReference>
<dbReference type="InterPro" id="IPR015944">
    <property type="entry name" value="Gly-tRNA-synth_bsu"/>
</dbReference>
<dbReference type="InterPro" id="IPR006194">
    <property type="entry name" value="Gly-tRNA-synth_heterodimer"/>
</dbReference>
<dbReference type="NCBIfam" id="TIGR00211">
    <property type="entry name" value="glyS"/>
    <property type="match status" value="1"/>
</dbReference>
<dbReference type="PANTHER" id="PTHR30075:SF2">
    <property type="entry name" value="GLYCINE--TRNA LIGASE, CHLOROPLASTIC_MITOCHONDRIAL 2"/>
    <property type="match status" value="1"/>
</dbReference>
<dbReference type="PANTHER" id="PTHR30075">
    <property type="entry name" value="GLYCYL-TRNA SYNTHETASE"/>
    <property type="match status" value="1"/>
</dbReference>
<dbReference type="Pfam" id="PF02092">
    <property type="entry name" value="tRNA_synt_2f"/>
    <property type="match status" value="1"/>
</dbReference>
<dbReference type="PRINTS" id="PR01045">
    <property type="entry name" value="TRNASYNTHGB"/>
</dbReference>
<dbReference type="SUPFAM" id="SSF109604">
    <property type="entry name" value="HD-domain/PDEase-like"/>
    <property type="match status" value="1"/>
</dbReference>
<dbReference type="PROSITE" id="PS50861">
    <property type="entry name" value="AA_TRNA_LIGASE_II_GLYAB"/>
    <property type="match status" value="1"/>
</dbReference>
<protein>
    <recommendedName>
        <fullName evidence="1">Glycine--tRNA ligase beta subunit</fullName>
        <ecNumber evidence="1">6.1.1.14</ecNumber>
    </recommendedName>
    <alternativeName>
        <fullName evidence="1">Glycyl-tRNA synthetase beta subunit</fullName>
        <shortName evidence="1">GlyRS</shortName>
    </alternativeName>
</protein>
<keyword id="KW-0030">Aminoacyl-tRNA synthetase</keyword>
<keyword id="KW-0067">ATP-binding</keyword>
<keyword id="KW-0963">Cytoplasm</keyword>
<keyword id="KW-0436">Ligase</keyword>
<keyword id="KW-0547">Nucleotide-binding</keyword>
<keyword id="KW-0648">Protein biosynthesis</keyword>
<keyword id="KW-1185">Reference proteome</keyword>
<feature type="chain" id="PRO_1000101290" description="Glycine--tRNA ligase beta subunit">
    <location>
        <begin position="1"/>
        <end position="689"/>
    </location>
</feature>
<reference key="1">
    <citation type="journal article" date="2006" name="Proc. Natl. Acad. Sci. U.S.A.">
        <title>Comparative genomics of the lactic acid bacteria.</title>
        <authorList>
            <person name="Makarova K.S."/>
            <person name="Slesarev A."/>
            <person name="Wolf Y.I."/>
            <person name="Sorokin A."/>
            <person name="Mirkin B."/>
            <person name="Koonin E.V."/>
            <person name="Pavlov A."/>
            <person name="Pavlova N."/>
            <person name="Karamychev V."/>
            <person name="Polouchine N."/>
            <person name="Shakhova V."/>
            <person name="Grigoriev I."/>
            <person name="Lou Y."/>
            <person name="Rohksar D."/>
            <person name="Lucas S."/>
            <person name="Huang K."/>
            <person name="Goodstein D.M."/>
            <person name="Hawkins T."/>
            <person name="Plengvidhya V."/>
            <person name="Welker D."/>
            <person name="Hughes J."/>
            <person name="Goh Y."/>
            <person name="Benson A."/>
            <person name="Baldwin K."/>
            <person name="Lee J.-H."/>
            <person name="Diaz-Muniz I."/>
            <person name="Dosti B."/>
            <person name="Smeianov V."/>
            <person name="Wechter W."/>
            <person name="Barabote R."/>
            <person name="Lorca G."/>
            <person name="Altermann E."/>
            <person name="Barrangou R."/>
            <person name="Ganesan B."/>
            <person name="Xie Y."/>
            <person name="Rawsthorne H."/>
            <person name="Tamir D."/>
            <person name="Parker C."/>
            <person name="Breidt F."/>
            <person name="Broadbent J.R."/>
            <person name="Hutkins R."/>
            <person name="O'Sullivan D."/>
            <person name="Steele J."/>
            <person name="Unlu G."/>
            <person name="Saier M.H. Jr."/>
            <person name="Klaenhammer T."/>
            <person name="Richardson P."/>
            <person name="Kozyavkin S."/>
            <person name="Weimer B.C."/>
            <person name="Mills D.A."/>
        </authorList>
    </citation>
    <scope>NUCLEOTIDE SEQUENCE [LARGE SCALE GENOMIC DNA]</scope>
    <source>
        <strain>ATCC 334 / BCRC 17002 / CCUG 31169 / CIP 107868 / KCTC 3260 / NRRL B-441</strain>
    </source>
</reference>
<sequence length="689" mass="76109">MTHQYLIEIGLEDMPAHVVTPSLQQFHDKTVAFLKENHLDHGAIDQYATPRRLALLIHDLADKQEDVEEDVKGPAKKIAQDADGNWTKAAIGFSRGQGMTPDDIVFKTIKGVDYVYLHKAIKGKTAAAILPGMLDVIKSLTFPTRMKWGAYDFEYIRPIHWLVSLLDDAIVPMKLLDVDAGRTTQGHRFLGRPVTLGNAADYVAALKAQFVIVEPAARKQLISDQIHQIAADHQWQIDLDADLLEEVNNLVEWPTAFAGNFDEKYLKIPEAVLITSMKDNQRYFYARDASGKMVNAFIGVRNGNADHLANVIAGNEKVLTARLEDAAFFYAEDQKRSIADDVDRLKAVSFHDKISSMYDKMARTRVIADLLADRFGLSATDKADLDRAASIYKFDLVTSMVGEFPELQGIMGEHYAQLAGEKPAVAQAIAEHYEPISADGALPESLVGTVLAIADKFDSLMSFFAVDLIPSGSNDPYALRRQAYGIVRMIAKHDWPFAVAELQTTIADALKAAGKTNNLDFAAHQQDLNAFMIDRAKQVLQGQKIRHDIVDAVTVRADADLAGILDAAKILSAHADDTDFKPVMEALGRVLRITKKQQVKVDVDTAKFENPSEGQLYDATVATAKKFDDEPTEADYQALKALADPINAYFDATMVMADDQAIRQNRLAALLQLAALIKQFGDVSQVIVK</sequence>
<proteinExistence type="inferred from homology"/>
<gene>
    <name evidence="1" type="primary">glyS</name>
    <name type="ordered locus">LSEI_1503</name>
</gene>
<evidence type="ECO:0000255" key="1">
    <source>
        <dbReference type="HAMAP-Rule" id="MF_00255"/>
    </source>
</evidence>
<organism>
    <name type="scientific">Lacticaseibacillus paracasei (strain ATCC 334 / BCRC 17002 / CCUG 31169 / CIP 107868 / KCTC 3260 / NRRL B-441)</name>
    <name type="common">Lactobacillus paracasei</name>
    <dbReference type="NCBI Taxonomy" id="321967"/>
    <lineage>
        <taxon>Bacteria</taxon>
        <taxon>Bacillati</taxon>
        <taxon>Bacillota</taxon>
        <taxon>Bacilli</taxon>
        <taxon>Lactobacillales</taxon>
        <taxon>Lactobacillaceae</taxon>
        <taxon>Lacticaseibacillus</taxon>
    </lineage>
</organism>
<name>SYGB_LACP3</name>